<dbReference type="EC" id="2.4.2.9" evidence="1"/>
<dbReference type="EMBL" id="CU928158">
    <property type="protein sequence ID" value="CAQ88221.1"/>
    <property type="molecule type" value="Genomic_DNA"/>
</dbReference>
<dbReference type="RefSeq" id="WP_002431660.1">
    <property type="nucleotide sequence ID" value="NC_011740.1"/>
</dbReference>
<dbReference type="SMR" id="B7LKE4"/>
<dbReference type="GeneID" id="75058262"/>
<dbReference type="KEGG" id="efe:EFER_0678"/>
<dbReference type="HOGENOM" id="CLU_067096_2_2_6"/>
<dbReference type="OrthoDB" id="9781675at2"/>
<dbReference type="UniPathway" id="UPA00574">
    <property type="reaction ID" value="UER00636"/>
</dbReference>
<dbReference type="Proteomes" id="UP000000745">
    <property type="component" value="Chromosome"/>
</dbReference>
<dbReference type="GO" id="GO:0005525">
    <property type="term" value="F:GTP binding"/>
    <property type="evidence" value="ECO:0007669"/>
    <property type="project" value="UniProtKB-KW"/>
</dbReference>
<dbReference type="GO" id="GO:0000287">
    <property type="term" value="F:magnesium ion binding"/>
    <property type="evidence" value="ECO:0007669"/>
    <property type="project" value="UniProtKB-UniRule"/>
</dbReference>
<dbReference type="GO" id="GO:0004845">
    <property type="term" value="F:uracil phosphoribosyltransferase activity"/>
    <property type="evidence" value="ECO:0007669"/>
    <property type="project" value="UniProtKB-UniRule"/>
</dbReference>
<dbReference type="GO" id="GO:0044206">
    <property type="term" value="P:UMP salvage"/>
    <property type="evidence" value="ECO:0007669"/>
    <property type="project" value="UniProtKB-UniRule"/>
</dbReference>
<dbReference type="GO" id="GO:0006223">
    <property type="term" value="P:uracil salvage"/>
    <property type="evidence" value="ECO:0007669"/>
    <property type="project" value="InterPro"/>
</dbReference>
<dbReference type="CDD" id="cd06223">
    <property type="entry name" value="PRTases_typeI"/>
    <property type="match status" value="1"/>
</dbReference>
<dbReference type="FunFam" id="3.40.50.2020:FF:000003">
    <property type="entry name" value="Uracil phosphoribosyltransferase"/>
    <property type="match status" value="1"/>
</dbReference>
<dbReference type="Gene3D" id="3.40.50.2020">
    <property type="match status" value="1"/>
</dbReference>
<dbReference type="HAMAP" id="MF_01218_B">
    <property type="entry name" value="Upp_B"/>
    <property type="match status" value="1"/>
</dbReference>
<dbReference type="InterPro" id="IPR000836">
    <property type="entry name" value="PRibTrfase_dom"/>
</dbReference>
<dbReference type="InterPro" id="IPR029057">
    <property type="entry name" value="PRTase-like"/>
</dbReference>
<dbReference type="InterPro" id="IPR034332">
    <property type="entry name" value="Upp_B"/>
</dbReference>
<dbReference type="InterPro" id="IPR050054">
    <property type="entry name" value="UPRTase/APRTase"/>
</dbReference>
<dbReference type="InterPro" id="IPR005765">
    <property type="entry name" value="Ura_phspho_trans"/>
</dbReference>
<dbReference type="NCBIfam" id="NF001097">
    <property type="entry name" value="PRK00129.1"/>
    <property type="match status" value="1"/>
</dbReference>
<dbReference type="NCBIfam" id="TIGR01091">
    <property type="entry name" value="upp"/>
    <property type="match status" value="1"/>
</dbReference>
<dbReference type="PANTHER" id="PTHR32315">
    <property type="entry name" value="ADENINE PHOSPHORIBOSYLTRANSFERASE"/>
    <property type="match status" value="1"/>
</dbReference>
<dbReference type="PANTHER" id="PTHR32315:SF4">
    <property type="entry name" value="URACIL PHOSPHORIBOSYLTRANSFERASE, CHLOROPLASTIC"/>
    <property type="match status" value="1"/>
</dbReference>
<dbReference type="Pfam" id="PF14681">
    <property type="entry name" value="UPRTase"/>
    <property type="match status" value="1"/>
</dbReference>
<dbReference type="SUPFAM" id="SSF53271">
    <property type="entry name" value="PRTase-like"/>
    <property type="match status" value="1"/>
</dbReference>
<reference key="1">
    <citation type="journal article" date="2009" name="PLoS Genet.">
        <title>Organised genome dynamics in the Escherichia coli species results in highly diverse adaptive paths.</title>
        <authorList>
            <person name="Touchon M."/>
            <person name="Hoede C."/>
            <person name="Tenaillon O."/>
            <person name="Barbe V."/>
            <person name="Baeriswyl S."/>
            <person name="Bidet P."/>
            <person name="Bingen E."/>
            <person name="Bonacorsi S."/>
            <person name="Bouchier C."/>
            <person name="Bouvet O."/>
            <person name="Calteau A."/>
            <person name="Chiapello H."/>
            <person name="Clermont O."/>
            <person name="Cruveiller S."/>
            <person name="Danchin A."/>
            <person name="Diard M."/>
            <person name="Dossat C."/>
            <person name="Karoui M.E."/>
            <person name="Frapy E."/>
            <person name="Garry L."/>
            <person name="Ghigo J.M."/>
            <person name="Gilles A.M."/>
            <person name="Johnson J."/>
            <person name="Le Bouguenec C."/>
            <person name="Lescat M."/>
            <person name="Mangenot S."/>
            <person name="Martinez-Jehanne V."/>
            <person name="Matic I."/>
            <person name="Nassif X."/>
            <person name="Oztas S."/>
            <person name="Petit M.A."/>
            <person name="Pichon C."/>
            <person name="Rouy Z."/>
            <person name="Ruf C.S."/>
            <person name="Schneider D."/>
            <person name="Tourret J."/>
            <person name="Vacherie B."/>
            <person name="Vallenet D."/>
            <person name="Medigue C."/>
            <person name="Rocha E.P.C."/>
            <person name="Denamur E."/>
        </authorList>
    </citation>
    <scope>NUCLEOTIDE SEQUENCE [LARGE SCALE GENOMIC DNA]</scope>
    <source>
        <strain>ATCC 35469 / DSM 13698 / BCRC 15582 / CCUG 18766 / IAM 14443 / JCM 21226 / LMG 7866 / NBRC 102419 / NCTC 12128 / CDC 0568-73</strain>
    </source>
</reference>
<sequence length="208" mass="22506">MKIVEVKHPLVKHKLGLMRETDISTKRFRELASEVGSLLTYEATADLETEKVTIEGWNGPVEVDQIKGKKITVVPILRAGLGMMEGVLENVPSARISVVGMYRNEETLEPVPYFQKLVSNIDERMALIVDPMLATGGSVIATIDLLKKAGCSSIKVLVLVAAPEGIAALEKAHPDVELYTASIDQGLNEHGYIIPGLGDAGDKIFGTK</sequence>
<evidence type="ECO:0000255" key="1">
    <source>
        <dbReference type="HAMAP-Rule" id="MF_01218"/>
    </source>
</evidence>
<protein>
    <recommendedName>
        <fullName evidence="1">Uracil phosphoribosyltransferase</fullName>
        <ecNumber evidence="1">2.4.2.9</ecNumber>
    </recommendedName>
    <alternativeName>
        <fullName evidence="1">UMP pyrophosphorylase</fullName>
    </alternativeName>
    <alternativeName>
        <fullName evidence="1">UPRTase</fullName>
    </alternativeName>
</protein>
<name>UPP_ESCF3</name>
<feature type="chain" id="PRO_1000139125" description="Uracil phosphoribosyltransferase">
    <location>
        <begin position="1"/>
        <end position="208"/>
    </location>
</feature>
<feature type="binding site" evidence="1">
    <location>
        <position position="78"/>
    </location>
    <ligand>
        <name>5-phospho-alpha-D-ribose 1-diphosphate</name>
        <dbReference type="ChEBI" id="CHEBI:58017"/>
    </ligand>
</feature>
<feature type="binding site" evidence="1">
    <location>
        <position position="103"/>
    </location>
    <ligand>
        <name>5-phospho-alpha-D-ribose 1-diphosphate</name>
        <dbReference type="ChEBI" id="CHEBI:58017"/>
    </ligand>
</feature>
<feature type="binding site" evidence="1">
    <location>
        <begin position="130"/>
        <end position="138"/>
    </location>
    <ligand>
        <name>5-phospho-alpha-D-ribose 1-diphosphate</name>
        <dbReference type="ChEBI" id="CHEBI:58017"/>
    </ligand>
</feature>
<feature type="binding site" evidence="1">
    <location>
        <position position="193"/>
    </location>
    <ligand>
        <name>uracil</name>
        <dbReference type="ChEBI" id="CHEBI:17568"/>
    </ligand>
</feature>
<feature type="binding site" evidence="1">
    <location>
        <begin position="198"/>
        <end position="200"/>
    </location>
    <ligand>
        <name>uracil</name>
        <dbReference type="ChEBI" id="CHEBI:17568"/>
    </ligand>
</feature>
<feature type="binding site" evidence="1">
    <location>
        <position position="199"/>
    </location>
    <ligand>
        <name>5-phospho-alpha-D-ribose 1-diphosphate</name>
        <dbReference type="ChEBI" id="CHEBI:58017"/>
    </ligand>
</feature>
<keyword id="KW-0021">Allosteric enzyme</keyword>
<keyword id="KW-0328">Glycosyltransferase</keyword>
<keyword id="KW-0342">GTP-binding</keyword>
<keyword id="KW-0460">Magnesium</keyword>
<keyword id="KW-0547">Nucleotide-binding</keyword>
<keyword id="KW-0808">Transferase</keyword>
<organism>
    <name type="scientific">Escherichia fergusonii (strain ATCC 35469 / DSM 13698 / CCUG 18766 / IAM 14443 / JCM 21226 / LMG 7866 / NBRC 102419 / NCTC 12128 / CDC 0568-73)</name>
    <dbReference type="NCBI Taxonomy" id="585054"/>
    <lineage>
        <taxon>Bacteria</taxon>
        <taxon>Pseudomonadati</taxon>
        <taxon>Pseudomonadota</taxon>
        <taxon>Gammaproteobacteria</taxon>
        <taxon>Enterobacterales</taxon>
        <taxon>Enterobacteriaceae</taxon>
        <taxon>Escherichia</taxon>
    </lineage>
</organism>
<accession>B7LKE4</accession>
<proteinExistence type="inferred from homology"/>
<gene>
    <name evidence="1" type="primary">upp</name>
    <name type="ordered locus">EFER_0678</name>
</gene>
<comment type="function">
    <text evidence="1">Catalyzes the conversion of uracil and 5-phospho-alpha-D-ribose 1-diphosphate (PRPP) to UMP and diphosphate.</text>
</comment>
<comment type="catalytic activity">
    <reaction evidence="1">
        <text>UMP + diphosphate = 5-phospho-alpha-D-ribose 1-diphosphate + uracil</text>
        <dbReference type="Rhea" id="RHEA:13017"/>
        <dbReference type="ChEBI" id="CHEBI:17568"/>
        <dbReference type="ChEBI" id="CHEBI:33019"/>
        <dbReference type="ChEBI" id="CHEBI:57865"/>
        <dbReference type="ChEBI" id="CHEBI:58017"/>
        <dbReference type="EC" id="2.4.2.9"/>
    </reaction>
</comment>
<comment type="cofactor">
    <cofactor evidence="1">
        <name>Mg(2+)</name>
        <dbReference type="ChEBI" id="CHEBI:18420"/>
    </cofactor>
    <text evidence="1">Binds 1 Mg(2+) ion per subunit. The magnesium is bound as Mg-PRPP.</text>
</comment>
<comment type="activity regulation">
    <text evidence="1">Allosterically activated by GTP.</text>
</comment>
<comment type="pathway">
    <text evidence="1">Pyrimidine metabolism; UMP biosynthesis via salvage pathway; UMP from uracil: step 1/1.</text>
</comment>
<comment type="similarity">
    <text evidence="1">Belongs to the UPRTase family.</text>
</comment>